<protein>
    <recommendedName>
        <fullName evidence="1">Arginine--tRNA ligase</fullName>
        <ecNumber evidence="1">6.1.1.19</ecNumber>
    </recommendedName>
    <alternativeName>
        <fullName evidence="1">Arginyl-tRNA synthetase</fullName>
        <shortName evidence="1">ArgRS</shortName>
    </alternativeName>
</protein>
<organism>
    <name type="scientific">Halobacterium salinarum (strain ATCC 700922 / JCM 11081 / NRC-1)</name>
    <name type="common">Halobacterium halobium</name>
    <dbReference type="NCBI Taxonomy" id="64091"/>
    <lineage>
        <taxon>Archaea</taxon>
        <taxon>Methanobacteriati</taxon>
        <taxon>Methanobacteriota</taxon>
        <taxon>Stenosarchaea group</taxon>
        <taxon>Halobacteria</taxon>
        <taxon>Halobacteriales</taxon>
        <taxon>Halobacteriaceae</taxon>
        <taxon>Halobacterium</taxon>
        <taxon>Halobacterium salinarum NRC-34001</taxon>
    </lineage>
</organism>
<proteinExistence type="inferred from homology"/>
<evidence type="ECO:0000255" key="1">
    <source>
        <dbReference type="HAMAP-Rule" id="MF_00123"/>
    </source>
</evidence>
<name>SYR_HALSA</name>
<geneLocation type="plasmid">
    <name>pNRC200</name>
</geneLocation>
<reference key="1">
    <citation type="journal article" date="2000" name="Proc. Natl. Acad. Sci. U.S.A.">
        <title>Genome sequence of Halobacterium species NRC-1.</title>
        <authorList>
            <person name="Ng W.V."/>
            <person name="Kennedy S.P."/>
            <person name="Mahairas G.G."/>
            <person name="Berquist B."/>
            <person name="Pan M."/>
            <person name="Shukla H.D."/>
            <person name="Lasky S.R."/>
            <person name="Baliga N.S."/>
            <person name="Thorsson V."/>
            <person name="Sbrogna J."/>
            <person name="Swartzell S."/>
            <person name="Weir D."/>
            <person name="Hall J."/>
            <person name="Dahl T.A."/>
            <person name="Welti R."/>
            <person name="Goo Y.A."/>
            <person name="Leithauser B."/>
            <person name="Keller K."/>
            <person name="Cruz R."/>
            <person name="Danson M.J."/>
            <person name="Hough D.W."/>
            <person name="Maddocks D.G."/>
            <person name="Jablonski P.E."/>
            <person name="Krebs M.P."/>
            <person name="Angevine C.M."/>
            <person name="Dale H."/>
            <person name="Isenbarger T.A."/>
            <person name="Peck R.F."/>
            <person name="Pohlschroder M."/>
            <person name="Spudich J.L."/>
            <person name="Jung K.-H."/>
            <person name="Alam M."/>
            <person name="Freitas T."/>
            <person name="Hou S."/>
            <person name="Daniels C.J."/>
            <person name="Dennis P.P."/>
            <person name="Omer A.D."/>
            <person name="Ebhardt H."/>
            <person name="Lowe T.M."/>
            <person name="Liang P."/>
            <person name="Riley M."/>
            <person name="Hood L."/>
            <person name="DasSarma S."/>
        </authorList>
    </citation>
    <scope>NUCLEOTIDE SEQUENCE [LARGE SCALE GENOMIC DNA]</scope>
    <source>
        <strain>ATCC 700922 / JCM 11081 / NRC-1</strain>
    </source>
</reference>
<keyword id="KW-0030">Aminoacyl-tRNA synthetase</keyword>
<keyword id="KW-0067">ATP-binding</keyword>
<keyword id="KW-0963">Cytoplasm</keyword>
<keyword id="KW-0436">Ligase</keyword>
<keyword id="KW-0547">Nucleotide-binding</keyword>
<keyword id="KW-0614">Plasmid</keyword>
<keyword id="KW-0648">Protein biosynthesis</keyword>
<keyword id="KW-1185">Reference proteome</keyword>
<dbReference type="EC" id="6.1.1.19" evidence="1"/>
<dbReference type="EMBL" id="AE004438">
    <property type="protein sequence ID" value="AAG20944.1"/>
    <property type="molecule type" value="Genomic_DNA"/>
</dbReference>
<dbReference type="RefSeq" id="WP_010904157.1">
    <property type="nucleotide sequence ID" value="NZ_BK010831.1"/>
</dbReference>
<dbReference type="SMR" id="Q9HHN2"/>
<dbReference type="FunCoup" id="Q9HHN2">
    <property type="interactions" value="179"/>
</dbReference>
<dbReference type="KEGG" id="hal:VNG_6312G"/>
<dbReference type="PATRIC" id="fig|64091.14.peg.2290"/>
<dbReference type="HOGENOM" id="CLU_006406_6_1_2"/>
<dbReference type="InParanoid" id="Q9HHN2"/>
<dbReference type="OrthoDB" id="372102at2157"/>
<dbReference type="PhylomeDB" id="Q9HHN2"/>
<dbReference type="Proteomes" id="UP000000554">
    <property type="component" value="Plasmid pNRC200"/>
</dbReference>
<dbReference type="GO" id="GO:0005737">
    <property type="term" value="C:cytoplasm"/>
    <property type="evidence" value="ECO:0007669"/>
    <property type="project" value="UniProtKB-SubCell"/>
</dbReference>
<dbReference type="GO" id="GO:0004814">
    <property type="term" value="F:arginine-tRNA ligase activity"/>
    <property type="evidence" value="ECO:0000318"/>
    <property type="project" value="GO_Central"/>
</dbReference>
<dbReference type="GO" id="GO:0005524">
    <property type="term" value="F:ATP binding"/>
    <property type="evidence" value="ECO:0007669"/>
    <property type="project" value="UniProtKB-UniRule"/>
</dbReference>
<dbReference type="GO" id="GO:0006420">
    <property type="term" value="P:arginyl-tRNA aminoacylation"/>
    <property type="evidence" value="ECO:0000318"/>
    <property type="project" value="GO_Central"/>
</dbReference>
<dbReference type="CDD" id="cd00671">
    <property type="entry name" value="ArgRS_core"/>
    <property type="match status" value="1"/>
</dbReference>
<dbReference type="Gene3D" id="3.30.1360.70">
    <property type="entry name" value="Arginyl tRNA synthetase N-terminal domain"/>
    <property type="match status" value="1"/>
</dbReference>
<dbReference type="Gene3D" id="3.40.50.620">
    <property type="entry name" value="HUPs"/>
    <property type="match status" value="1"/>
</dbReference>
<dbReference type="Gene3D" id="1.10.730.10">
    <property type="entry name" value="Isoleucyl-tRNA Synthetase, Domain 1"/>
    <property type="match status" value="1"/>
</dbReference>
<dbReference type="HAMAP" id="MF_00123">
    <property type="entry name" value="Arg_tRNA_synth"/>
    <property type="match status" value="1"/>
</dbReference>
<dbReference type="InterPro" id="IPR001412">
    <property type="entry name" value="aa-tRNA-synth_I_CS"/>
</dbReference>
<dbReference type="InterPro" id="IPR001278">
    <property type="entry name" value="Arg-tRNA-ligase"/>
</dbReference>
<dbReference type="InterPro" id="IPR005148">
    <property type="entry name" value="Arg-tRNA-synth_N"/>
</dbReference>
<dbReference type="InterPro" id="IPR036695">
    <property type="entry name" value="Arg-tRNA-synth_N_sf"/>
</dbReference>
<dbReference type="InterPro" id="IPR035684">
    <property type="entry name" value="ArgRS_core"/>
</dbReference>
<dbReference type="InterPro" id="IPR008909">
    <property type="entry name" value="DALR_anticod-bd"/>
</dbReference>
<dbReference type="InterPro" id="IPR014729">
    <property type="entry name" value="Rossmann-like_a/b/a_fold"/>
</dbReference>
<dbReference type="InterPro" id="IPR009080">
    <property type="entry name" value="tRNAsynth_Ia_anticodon-bd"/>
</dbReference>
<dbReference type="PANTHER" id="PTHR11956:SF5">
    <property type="entry name" value="ARGININE--TRNA LIGASE, CYTOPLASMIC"/>
    <property type="match status" value="1"/>
</dbReference>
<dbReference type="PANTHER" id="PTHR11956">
    <property type="entry name" value="ARGINYL-TRNA SYNTHETASE"/>
    <property type="match status" value="1"/>
</dbReference>
<dbReference type="Pfam" id="PF03485">
    <property type="entry name" value="Arg_tRNA_synt_N"/>
    <property type="match status" value="1"/>
</dbReference>
<dbReference type="Pfam" id="PF05746">
    <property type="entry name" value="DALR_1"/>
    <property type="match status" value="1"/>
</dbReference>
<dbReference type="Pfam" id="PF00750">
    <property type="entry name" value="tRNA-synt_1d"/>
    <property type="match status" value="1"/>
</dbReference>
<dbReference type="PRINTS" id="PR01038">
    <property type="entry name" value="TRNASYNTHARG"/>
</dbReference>
<dbReference type="SMART" id="SM01016">
    <property type="entry name" value="Arg_tRNA_synt_N"/>
    <property type="match status" value="1"/>
</dbReference>
<dbReference type="SMART" id="SM00836">
    <property type="entry name" value="DALR_1"/>
    <property type="match status" value="1"/>
</dbReference>
<dbReference type="SUPFAM" id="SSF47323">
    <property type="entry name" value="Anticodon-binding domain of a subclass of class I aminoacyl-tRNA synthetases"/>
    <property type="match status" value="1"/>
</dbReference>
<dbReference type="SUPFAM" id="SSF55190">
    <property type="entry name" value="Arginyl-tRNA synthetase (ArgRS), N-terminal 'additional' domain"/>
    <property type="match status" value="1"/>
</dbReference>
<dbReference type="SUPFAM" id="SSF52374">
    <property type="entry name" value="Nucleotidylyl transferase"/>
    <property type="match status" value="1"/>
</dbReference>
<dbReference type="PROSITE" id="PS00178">
    <property type="entry name" value="AA_TRNA_LIGASE_I"/>
    <property type="match status" value="1"/>
</dbReference>
<comment type="catalytic activity">
    <reaction evidence="1">
        <text>tRNA(Arg) + L-arginine + ATP = L-arginyl-tRNA(Arg) + AMP + diphosphate</text>
        <dbReference type="Rhea" id="RHEA:20301"/>
        <dbReference type="Rhea" id="RHEA-COMP:9658"/>
        <dbReference type="Rhea" id="RHEA-COMP:9673"/>
        <dbReference type="ChEBI" id="CHEBI:30616"/>
        <dbReference type="ChEBI" id="CHEBI:32682"/>
        <dbReference type="ChEBI" id="CHEBI:33019"/>
        <dbReference type="ChEBI" id="CHEBI:78442"/>
        <dbReference type="ChEBI" id="CHEBI:78513"/>
        <dbReference type="ChEBI" id="CHEBI:456215"/>
        <dbReference type="EC" id="6.1.1.19"/>
    </reaction>
</comment>
<comment type="subcellular location">
    <subcellularLocation>
        <location evidence="1">Cytoplasm</location>
    </subcellularLocation>
</comment>
<comment type="similarity">
    <text evidence="1">Belongs to the class-I aminoacyl-tRNA synthetase family.</text>
</comment>
<accession>Q9HHN2</accession>
<sequence>MLYNLRQELLAGIRAATSDAGYDYEVDQSAIELEDITDEEKGEFSSPISFSIAAAAGAPPVDVAAAIADAHRSNGLPAEVEAVTVEGGHINYHADTTDLADATLSTILRDGSEYGTRTDADPDTILADVSSPNIAKPLHVGHLRNTILSDAVMNILEARGHDVTRDNHLGDWGVQFGNLMHEYTEFGDEATLEDDAIEHLLDLYQQFEQRDSMLADLEDDETVTDQFADAVTEERDYHADSGKEWFTRLEQGDEDATALWERFRTVSIDRFKQTYDDLDVAFDVWNGESFYAQEGWNDVIIEKAIENDVAMRGEGESVYIPVYPDDYENVGDPQAADVDASLDRARQMREANDDLEDADFDPFYIVKSDGSTLYGTRDLATIEYRIEEYDADQSVYVVANEQNQYFQQLFVAARKMGYNDIKLKHIDYGLISLPEGSMSTRKGQIITAREVLDRAQDRAEEIIAEKGRIDDAEAQSVATKIALATIKYEMVAAKRERDTTFDIDESVALEGDTGPYVQYAATRGYSILDGADAAPEIDDLDPSVFNDTDVELLFELARYPLVLERCEERYDAAPLAHYLLQLAHVFNSFYHKNAVLDAENARTERLLLTKATTQIFDNGLGLLGIDVLEEM</sequence>
<gene>
    <name evidence="1" type="primary">argS</name>
    <name type="ordered locus">VNG_6312G</name>
</gene>
<feature type="chain" id="PRO_0000151644" description="Arginine--tRNA ligase">
    <location>
        <begin position="1"/>
        <end position="631"/>
    </location>
</feature>
<feature type="short sequence motif" description="'HIGH' region">
    <location>
        <begin position="132"/>
        <end position="142"/>
    </location>
</feature>